<keyword id="KW-0963">Cytoplasm</keyword>
<keyword id="KW-0444">Lipid biosynthesis</keyword>
<keyword id="KW-0443">Lipid metabolism</keyword>
<keyword id="KW-0594">Phospholipid biosynthesis</keyword>
<keyword id="KW-1208">Phospholipid metabolism</keyword>
<keyword id="KW-0808">Transferase</keyword>
<reference key="1">
    <citation type="submission" date="2007-04" db="EMBL/GenBank/DDBJ databases">
        <title>Complete sequence of Pseudomonas mendocina ymp.</title>
        <authorList>
            <consortium name="US DOE Joint Genome Institute"/>
            <person name="Copeland A."/>
            <person name="Lucas S."/>
            <person name="Lapidus A."/>
            <person name="Barry K."/>
            <person name="Glavina del Rio T."/>
            <person name="Dalin E."/>
            <person name="Tice H."/>
            <person name="Pitluck S."/>
            <person name="Kiss H."/>
            <person name="Brettin T."/>
            <person name="Detter J.C."/>
            <person name="Bruce D."/>
            <person name="Han C."/>
            <person name="Schmutz J."/>
            <person name="Larimer F."/>
            <person name="Land M."/>
            <person name="Hauser L."/>
            <person name="Kyrpides N."/>
            <person name="Mikhailova N."/>
            <person name="Hersman L."/>
            <person name="Dubois J."/>
            <person name="Maurice P."/>
            <person name="Richardson P."/>
        </authorList>
    </citation>
    <scope>NUCLEOTIDE SEQUENCE [LARGE SCALE GENOMIC DNA]</scope>
    <source>
        <strain>ymp</strain>
    </source>
</reference>
<feature type="chain" id="PRO_0000329254" description="Phosphate acyltransferase">
    <location>
        <begin position="1"/>
        <end position="336"/>
    </location>
</feature>
<name>PLSX_ECTM1</name>
<evidence type="ECO:0000255" key="1">
    <source>
        <dbReference type="HAMAP-Rule" id="MF_00019"/>
    </source>
</evidence>
<evidence type="ECO:0000305" key="2"/>
<organism>
    <name type="scientific">Ectopseudomonas mendocina (strain ymp)</name>
    <name type="common">Pseudomonas mendocina</name>
    <dbReference type="NCBI Taxonomy" id="399739"/>
    <lineage>
        <taxon>Bacteria</taxon>
        <taxon>Pseudomonadati</taxon>
        <taxon>Pseudomonadota</taxon>
        <taxon>Gammaproteobacteria</taxon>
        <taxon>Pseudomonadales</taxon>
        <taxon>Pseudomonadaceae</taxon>
        <taxon>Ectopseudomonas</taxon>
    </lineage>
</organism>
<sequence>MSASIIAIDAMGGDFGPHCIVPACISALAEFPSLHLALVGQAPLIEEQLARQSGVDRSRLQVHHASEVIAMDERPAQALRGKPDASMRVALELVRQRQAHACVSAGNTGALMALSRYVLKTLPGIDRPAMVSPIPTERGHCYLLDLGANVDCSAEHLYQFAIMGAVAAETLGVARPRVALLNVGTEDIKGNQQVKLAASLLLQARGLNFIGYIEGDGVYRGEADVVVCDGFVGNILLKASEGLAKMITGRVETLFNEGLFAQAVGALAMPLLRRLKADLAPARHNGASFLGLQGIVVKSHGAAGQESFQSAIRCALREVQENLPQRLHGRLEDLLL</sequence>
<protein>
    <recommendedName>
        <fullName evidence="1">Phosphate acyltransferase</fullName>
        <ecNumber evidence="1">2.3.1.274</ecNumber>
    </recommendedName>
    <alternativeName>
        <fullName evidence="1">Acyl-ACP phosphotransacylase</fullName>
    </alternativeName>
    <alternativeName>
        <fullName evidence="1">Acyl-[acyl-carrier-protein]--phosphate acyltransferase</fullName>
    </alternativeName>
    <alternativeName>
        <fullName evidence="1">Phosphate-acyl-ACP acyltransferase</fullName>
    </alternativeName>
</protein>
<proteinExistence type="inferred from homology"/>
<accession>A4XSS4</accession>
<comment type="function">
    <text evidence="1">Catalyzes the reversible formation of acyl-phosphate (acyl-PO(4)) from acyl-[acyl-carrier-protein] (acyl-ACP). This enzyme utilizes acyl-ACP as fatty acyl donor, but not acyl-CoA.</text>
</comment>
<comment type="catalytic activity">
    <reaction evidence="1">
        <text>a fatty acyl-[ACP] + phosphate = an acyl phosphate + holo-[ACP]</text>
        <dbReference type="Rhea" id="RHEA:42292"/>
        <dbReference type="Rhea" id="RHEA-COMP:9685"/>
        <dbReference type="Rhea" id="RHEA-COMP:14125"/>
        <dbReference type="ChEBI" id="CHEBI:43474"/>
        <dbReference type="ChEBI" id="CHEBI:59918"/>
        <dbReference type="ChEBI" id="CHEBI:64479"/>
        <dbReference type="ChEBI" id="CHEBI:138651"/>
        <dbReference type="EC" id="2.3.1.274"/>
    </reaction>
</comment>
<comment type="pathway">
    <text evidence="1">Lipid metabolism; phospholipid metabolism.</text>
</comment>
<comment type="subunit">
    <text evidence="1">Homodimer. Probably interacts with PlsY.</text>
</comment>
<comment type="subcellular location">
    <subcellularLocation>
        <location evidence="1">Cytoplasm</location>
    </subcellularLocation>
    <text evidence="1">Associated with the membrane possibly through PlsY.</text>
</comment>
<comment type="similarity">
    <text evidence="1">Belongs to the PlsX family.</text>
</comment>
<comment type="sequence caution" evidence="2">
    <conflict type="erroneous initiation">
        <sequence resource="EMBL-CDS" id="ABP84390"/>
    </conflict>
</comment>
<gene>
    <name evidence="1" type="primary">plsX</name>
    <name type="ordered locus">Pmen_1626</name>
</gene>
<dbReference type="EC" id="2.3.1.274" evidence="1"/>
<dbReference type="EMBL" id="CP000680">
    <property type="protein sequence ID" value="ABP84390.1"/>
    <property type="status" value="ALT_INIT"/>
    <property type="molecule type" value="Genomic_DNA"/>
</dbReference>
<dbReference type="SMR" id="A4XSS4"/>
<dbReference type="STRING" id="399739.Pmen_1626"/>
<dbReference type="KEGG" id="pmy:Pmen_1626"/>
<dbReference type="eggNOG" id="COG0416">
    <property type="taxonomic scope" value="Bacteria"/>
</dbReference>
<dbReference type="HOGENOM" id="CLU_039379_1_0_6"/>
<dbReference type="OrthoDB" id="9806408at2"/>
<dbReference type="UniPathway" id="UPA00085"/>
<dbReference type="GO" id="GO:0005737">
    <property type="term" value="C:cytoplasm"/>
    <property type="evidence" value="ECO:0007669"/>
    <property type="project" value="UniProtKB-SubCell"/>
</dbReference>
<dbReference type="GO" id="GO:0043811">
    <property type="term" value="F:phosphate:acyl-[acyl carrier protein] acyltransferase activity"/>
    <property type="evidence" value="ECO:0007669"/>
    <property type="project" value="UniProtKB-UniRule"/>
</dbReference>
<dbReference type="GO" id="GO:0006633">
    <property type="term" value="P:fatty acid biosynthetic process"/>
    <property type="evidence" value="ECO:0007669"/>
    <property type="project" value="UniProtKB-UniRule"/>
</dbReference>
<dbReference type="GO" id="GO:0008654">
    <property type="term" value="P:phospholipid biosynthetic process"/>
    <property type="evidence" value="ECO:0007669"/>
    <property type="project" value="UniProtKB-KW"/>
</dbReference>
<dbReference type="Gene3D" id="3.40.718.10">
    <property type="entry name" value="Isopropylmalate Dehydrogenase"/>
    <property type="match status" value="1"/>
</dbReference>
<dbReference type="HAMAP" id="MF_00019">
    <property type="entry name" value="PlsX"/>
    <property type="match status" value="1"/>
</dbReference>
<dbReference type="InterPro" id="IPR003664">
    <property type="entry name" value="FA_synthesis"/>
</dbReference>
<dbReference type="InterPro" id="IPR012281">
    <property type="entry name" value="Phospholipid_synth_PlsX-like"/>
</dbReference>
<dbReference type="NCBIfam" id="TIGR00182">
    <property type="entry name" value="plsX"/>
    <property type="match status" value="1"/>
</dbReference>
<dbReference type="PANTHER" id="PTHR30100">
    <property type="entry name" value="FATTY ACID/PHOSPHOLIPID SYNTHESIS PROTEIN PLSX"/>
    <property type="match status" value="1"/>
</dbReference>
<dbReference type="PANTHER" id="PTHR30100:SF1">
    <property type="entry name" value="PHOSPHATE ACYLTRANSFERASE"/>
    <property type="match status" value="1"/>
</dbReference>
<dbReference type="Pfam" id="PF02504">
    <property type="entry name" value="FA_synthesis"/>
    <property type="match status" value="1"/>
</dbReference>
<dbReference type="PIRSF" id="PIRSF002465">
    <property type="entry name" value="Phsphlp_syn_PlsX"/>
    <property type="match status" value="1"/>
</dbReference>
<dbReference type="SUPFAM" id="SSF53659">
    <property type="entry name" value="Isocitrate/Isopropylmalate dehydrogenase-like"/>
    <property type="match status" value="1"/>
</dbReference>